<keyword id="KW-0256">Endoplasmic reticulum</keyword>
<keyword id="KW-0444">Lipid biosynthesis</keyword>
<keyword id="KW-0443">Lipid metabolism</keyword>
<keyword id="KW-0472">Membrane</keyword>
<keyword id="KW-1185">Reference proteome</keyword>
<keyword id="KW-0752">Steroid biosynthesis</keyword>
<keyword id="KW-0753">Steroid metabolism</keyword>
<keyword id="KW-0756">Sterol biosynthesis</keyword>
<keyword id="KW-1207">Sterol metabolism</keyword>
<keyword id="KW-0812">Transmembrane</keyword>
<keyword id="KW-1133">Transmembrane helix</keyword>
<protein>
    <recommendedName>
        <fullName evidence="5">Ergosterol biosynthetic protein 28</fullName>
    </recommendedName>
</protein>
<sequence length="136" mass="15252">MSQILAMLPDSLVAKWNVVVSVAALFNTVQSFLTPKLTKRVYSNTNEVNGLQGRTFGIWTLLSAIVRFYCAYHITNPDVYFLCQCTYYLACFHFLSEWLLFRTTNLGPGLLSPIVVSTVSIWFMAKEKASILGIAA</sequence>
<dbReference type="EMBL" id="CU329671">
    <property type="protein sequence ID" value="CAA21279.1"/>
    <property type="molecule type" value="Genomic_DNA"/>
</dbReference>
<dbReference type="PIR" id="T40262">
    <property type="entry name" value="T40262"/>
</dbReference>
<dbReference type="RefSeq" id="NP_595410.1">
    <property type="nucleotide sequence ID" value="NM_001021317.2"/>
</dbReference>
<dbReference type="BioGRID" id="277541">
    <property type="interactions" value="83"/>
</dbReference>
<dbReference type="FunCoup" id="O74820">
    <property type="interactions" value="195"/>
</dbReference>
<dbReference type="STRING" id="284812.O74820"/>
<dbReference type="PaxDb" id="4896-SPBC337.09.1"/>
<dbReference type="EnsemblFungi" id="SPBC337.09.1">
    <property type="protein sequence ID" value="SPBC337.09.1:pep"/>
    <property type="gene ID" value="SPBC337.09"/>
</dbReference>
<dbReference type="GeneID" id="2541026"/>
<dbReference type="KEGG" id="spo:2541026"/>
<dbReference type="PomBase" id="SPBC337.09">
    <property type="gene designation" value="erg28"/>
</dbReference>
<dbReference type="VEuPathDB" id="FungiDB:SPBC337.09"/>
<dbReference type="eggNOG" id="KOG3455">
    <property type="taxonomic scope" value="Eukaryota"/>
</dbReference>
<dbReference type="HOGENOM" id="CLU_114589_0_0_1"/>
<dbReference type="InParanoid" id="O74820"/>
<dbReference type="OMA" id="AYAAFHI"/>
<dbReference type="PhylomeDB" id="O74820"/>
<dbReference type="UniPathway" id="UPA00768"/>
<dbReference type="PRO" id="PR:O74820"/>
<dbReference type="Proteomes" id="UP000002485">
    <property type="component" value="Chromosome II"/>
</dbReference>
<dbReference type="GO" id="GO:0005783">
    <property type="term" value="C:endoplasmic reticulum"/>
    <property type="evidence" value="ECO:0007005"/>
    <property type="project" value="PomBase"/>
</dbReference>
<dbReference type="GO" id="GO:0005789">
    <property type="term" value="C:endoplasmic reticulum membrane"/>
    <property type="evidence" value="ECO:0000250"/>
    <property type="project" value="PomBase"/>
</dbReference>
<dbReference type="GO" id="GO:0030674">
    <property type="term" value="F:protein-macromolecule adaptor activity"/>
    <property type="evidence" value="ECO:0000318"/>
    <property type="project" value="GO_Central"/>
</dbReference>
<dbReference type="GO" id="GO:0043495">
    <property type="term" value="F:protein-membrane adaptor activity"/>
    <property type="evidence" value="ECO:0000266"/>
    <property type="project" value="PomBase"/>
</dbReference>
<dbReference type="GO" id="GO:0006696">
    <property type="term" value="P:ergosterol biosynthetic process"/>
    <property type="evidence" value="ECO:0000250"/>
    <property type="project" value="PomBase"/>
</dbReference>
<dbReference type="InterPro" id="IPR005352">
    <property type="entry name" value="Erg28"/>
</dbReference>
<dbReference type="PANTHER" id="PTHR15451:SF19">
    <property type="entry name" value="ERGOSTEROL BIOSYNTHETIC PROTEIN 28 HOMOLOG"/>
    <property type="match status" value="1"/>
</dbReference>
<dbReference type="PANTHER" id="PTHR15451">
    <property type="entry name" value="ERGOSTEROL BIOSYNTHETIC PROTEIN 28-RELATED"/>
    <property type="match status" value="1"/>
</dbReference>
<dbReference type="Pfam" id="PF03694">
    <property type="entry name" value="Erg28"/>
    <property type="match status" value="1"/>
</dbReference>
<comment type="function">
    <text evidence="2 8 9">Part of the third module of ergosterol biosynthesis pathway that includes by the late steps of the pathway (PubMed:11160377). Erg28 has a role as a scaffold to help anchor the catalytic components of the C-4 demethylation complex erg25, erg26 and erg27 to the endoplasmic reticulum (PubMed:11160377). The third module or late pathway involves the ergosterol synthesis itself through consecutive reactions that mainly occur in the endoplasmic reticulum (ER) membrane. Firstly, the squalene synthase erg9 catalyzes the condensation of 2 farnesyl pyrophosphate moieties to form squalene, which is the precursor of all steroids. Secondly, squalene is converted into lanosterol by the consecutive action of the squalene epoxidase erg1 and the lanosterol synthase erg7. The lanosterol 14-alpha-demethylase erg11/cyp1 catalyzes C14-demethylation of lanosterol to produce 4,4'-dimethyl cholesta-8,14,24-triene-3-beta-ol. In the next steps, a complex process involving various demethylation, reduction and desaturation reactions catalyzed by the C-14 reductase erg24 and the C-4 demethylation complex erg25-erg26-erg27 leads to the production of zymosterol. Erg28 likely functions in the C-4 demethylation complex reaction by tethering erg26 and Erg27 to the endoplasmic reticulum or to facilitate interaction between these proteins. Then, the sterol 24-C-methyltransferase erg6 catalyzes the methyl transfer from S-adenosyl-methionine to the C-24 of zymosterol to form fecosterol. The C-8 sterol isomerase erg2 catalyzes the reaction which results in unsaturation at C-7 in the B ring of sterols and thus converts fecosterol to episterol. The sterol-C5-desaturases erg31 and erg32 then catalyze the introduction of a C-5 double bond in the B ring to produce 5-dehydroepisterol. The C-22 sterol desaturase erg5 further converts 5-dehydroepisterol into ergosta-5,7,22,24(28)-tetraen-3beta-ol by forming the C-22(23) double bond in the sterol side chain. Finally, ergosta-5,7,22,24(28)-tetraen-3beta-ol is substrate of the C-24(28) sterol reductase erg4 to produce ergosterol (Probable) (PubMed:18310029). In the genus Schizosaccharomyces, a second route exists between lanosterol and fecosterol, via the methylation of lanosterol to eburicol by erg6, followed by C14-demethylation by erg11/cyp1 and C4-demethylation by the demethylation complex erg25-erg26-erg27 (Probable) (PubMed:8586261).</text>
</comment>
<comment type="function">
    <text evidence="3">Extends the chronological lifespan when overexpressed.</text>
</comment>
<comment type="pathway">
    <text evidence="7">Steroid metabolism; ergosterol biosynthesis.</text>
</comment>
<comment type="subunit">
    <text evidence="7">Heterotetramer of erg25, erg26, erg27 and erg28 (Probable). Erg28 acts as a scaffold to tether erg27 and other 4,4-demethylation-related enzymes, forming a demethylation enzyme complex, in the endoplasmic reticulum (Probable).</text>
</comment>
<comment type="subcellular location">
    <subcellularLocation>
        <location evidence="6">Endoplasmic reticulum membrane</location>
        <topology evidence="6">Multi-pass membrane protein</topology>
    </subcellularLocation>
</comment>
<comment type="miscellaneous">
    <text evidence="4">In Aspergillus, the biosynthesis pathway of the sterol precursors leading to the prevalent sterol ergosterol differs from yeast. The ringsystem of lanosterol in S.cerevisiae is firstly demethylised in three enzymatic steps leading to the intermediate zymosterol and secondly a methyl group is added to zymosterol by the sterol 24-C-methyltransferase to form fecosterol. In Aspergillus, lanosterol is firstly transmethylated by the sterol 24-C-methyltransferase leading to the intermediate eburicol and secondly demethylated in three steps to form fecosterol. In the genus Schizosaccharomyces, 2 routes exist from lanosterol to erposterol: the classical one via zymosterol and the second one via the formation of eburicol followed by demethylation.</text>
</comment>
<comment type="similarity">
    <text evidence="6">Belongs to the ERG28 family.</text>
</comment>
<evidence type="ECO:0000255" key="1"/>
<evidence type="ECO:0000269" key="2">
    <source>
    </source>
</evidence>
<evidence type="ECO:0000269" key="3">
    <source>
    </source>
</evidence>
<evidence type="ECO:0000269" key="4">
    <source>
    </source>
</evidence>
<evidence type="ECO:0000303" key="5">
    <source>
    </source>
</evidence>
<evidence type="ECO:0000305" key="6"/>
<evidence type="ECO:0000305" key="7">
    <source>
    </source>
</evidence>
<evidence type="ECO:0000305" key="8">
    <source>
    </source>
</evidence>
<evidence type="ECO:0000305" key="9">
    <source>
    </source>
</evidence>
<organism>
    <name type="scientific">Schizosaccharomyces pombe (strain 972 / ATCC 24843)</name>
    <name type="common">Fission yeast</name>
    <dbReference type="NCBI Taxonomy" id="284812"/>
    <lineage>
        <taxon>Eukaryota</taxon>
        <taxon>Fungi</taxon>
        <taxon>Dikarya</taxon>
        <taxon>Ascomycota</taxon>
        <taxon>Taphrinomycotina</taxon>
        <taxon>Schizosaccharomycetes</taxon>
        <taxon>Schizosaccharomycetales</taxon>
        <taxon>Schizosaccharomycetaceae</taxon>
        <taxon>Schizosaccharomyces</taxon>
    </lineage>
</organism>
<reference key="1">
    <citation type="journal article" date="2002" name="Nature">
        <title>The genome sequence of Schizosaccharomyces pombe.</title>
        <authorList>
            <person name="Wood V."/>
            <person name="Gwilliam R."/>
            <person name="Rajandream M.A."/>
            <person name="Lyne M.H."/>
            <person name="Lyne R."/>
            <person name="Stewart A."/>
            <person name="Sgouros J.G."/>
            <person name="Peat N."/>
            <person name="Hayles J."/>
            <person name="Baker S.G."/>
            <person name="Basham D."/>
            <person name="Bowman S."/>
            <person name="Brooks K."/>
            <person name="Brown D."/>
            <person name="Brown S."/>
            <person name="Chillingworth T."/>
            <person name="Churcher C.M."/>
            <person name="Collins M."/>
            <person name="Connor R."/>
            <person name="Cronin A."/>
            <person name="Davis P."/>
            <person name="Feltwell T."/>
            <person name="Fraser A."/>
            <person name="Gentles S."/>
            <person name="Goble A."/>
            <person name="Hamlin N."/>
            <person name="Harris D.E."/>
            <person name="Hidalgo J."/>
            <person name="Hodgson G."/>
            <person name="Holroyd S."/>
            <person name="Hornsby T."/>
            <person name="Howarth S."/>
            <person name="Huckle E.J."/>
            <person name="Hunt S."/>
            <person name="Jagels K."/>
            <person name="James K.D."/>
            <person name="Jones L."/>
            <person name="Jones M."/>
            <person name="Leather S."/>
            <person name="McDonald S."/>
            <person name="McLean J."/>
            <person name="Mooney P."/>
            <person name="Moule S."/>
            <person name="Mungall K.L."/>
            <person name="Murphy L.D."/>
            <person name="Niblett D."/>
            <person name="Odell C."/>
            <person name="Oliver K."/>
            <person name="O'Neil S."/>
            <person name="Pearson D."/>
            <person name="Quail M.A."/>
            <person name="Rabbinowitsch E."/>
            <person name="Rutherford K.M."/>
            <person name="Rutter S."/>
            <person name="Saunders D."/>
            <person name="Seeger K."/>
            <person name="Sharp S."/>
            <person name="Skelton J."/>
            <person name="Simmonds M.N."/>
            <person name="Squares R."/>
            <person name="Squares S."/>
            <person name="Stevens K."/>
            <person name="Taylor K."/>
            <person name="Taylor R.G."/>
            <person name="Tivey A."/>
            <person name="Walsh S.V."/>
            <person name="Warren T."/>
            <person name="Whitehead S."/>
            <person name="Woodward J.R."/>
            <person name="Volckaert G."/>
            <person name="Aert R."/>
            <person name="Robben J."/>
            <person name="Grymonprez B."/>
            <person name="Weltjens I."/>
            <person name="Vanstreels E."/>
            <person name="Rieger M."/>
            <person name="Schaefer M."/>
            <person name="Mueller-Auer S."/>
            <person name="Gabel C."/>
            <person name="Fuchs M."/>
            <person name="Duesterhoeft A."/>
            <person name="Fritzc C."/>
            <person name="Holzer E."/>
            <person name="Moestl D."/>
            <person name="Hilbert H."/>
            <person name="Borzym K."/>
            <person name="Langer I."/>
            <person name="Beck A."/>
            <person name="Lehrach H."/>
            <person name="Reinhardt R."/>
            <person name="Pohl T.M."/>
            <person name="Eger P."/>
            <person name="Zimmermann W."/>
            <person name="Wedler H."/>
            <person name="Wambutt R."/>
            <person name="Purnelle B."/>
            <person name="Goffeau A."/>
            <person name="Cadieu E."/>
            <person name="Dreano S."/>
            <person name="Gloux S."/>
            <person name="Lelaure V."/>
            <person name="Mottier S."/>
            <person name="Galibert F."/>
            <person name="Aves S.J."/>
            <person name="Xiang Z."/>
            <person name="Hunt C."/>
            <person name="Moore K."/>
            <person name="Hurst S.M."/>
            <person name="Lucas M."/>
            <person name="Rochet M."/>
            <person name="Gaillardin C."/>
            <person name="Tallada V.A."/>
            <person name="Garzon A."/>
            <person name="Thode G."/>
            <person name="Daga R.R."/>
            <person name="Cruzado L."/>
            <person name="Jimenez J."/>
            <person name="Sanchez M."/>
            <person name="del Rey F."/>
            <person name="Benito J."/>
            <person name="Dominguez A."/>
            <person name="Revuelta J.L."/>
            <person name="Moreno S."/>
            <person name="Armstrong J."/>
            <person name="Forsburg S.L."/>
            <person name="Cerutti L."/>
            <person name="Lowe T."/>
            <person name="McCombie W.R."/>
            <person name="Paulsen I."/>
            <person name="Potashkin J."/>
            <person name="Shpakovski G.V."/>
            <person name="Ussery D."/>
            <person name="Barrell B.G."/>
            <person name="Nurse P."/>
        </authorList>
    </citation>
    <scope>NUCLEOTIDE SEQUENCE [LARGE SCALE GENOMIC DNA]</scope>
    <source>
        <strain>972 / ATCC 24843</strain>
    </source>
</reference>
<reference key="2">
    <citation type="journal article" date="1993" name="Mol. Cell. Biol.">
        <title>Conservation between human and fungal squalene synthetases: similarities in structure, function, and regulation.</title>
        <authorList>
            <person name="Robinson G.W."/>
            <person name="Tsay Y.H."/>
            <person name="Kienzle B.K."/>
            <person name="Smith-Monroy C.A."/>
            <person name="Bishop R.W."/>
        </authorList>
    </citation>
    <scope>FUNCTION</scope>
    <source>
        <strain>972 / ATCC 24843</strain>
    </source>
</reference>
<reference key="3">
    <citation type="journal article" date="1995" name="FEMS Microbiol. Lett.">
        <title>Identification of 24-methylene-24,25-dihydrolanosterol as a precursor of ergosterol in the yeasts Schizosaccharomyces pombe and Schizosaccharomyces octosporus.</title>
        <authorList>
            <person name="Harmouch N."/>
            <person name="Coulon J."/>
            <person name="Bonaly R."/>
        </authorList>
    </citation>
    <scope>FUNCTION</scope>
</reference>
<reference key="4">
    <citation type="journal article" date="2001" name="J. Lipid Res.">
        <title>A novel gene conserved from yeast to humans is involved in sterol biosynthesis.</title>
        <authorList>
            <person name="Gachotte D."/>
            <person name="Eckstein J."/>
            <person name="Barbuch R."/>
            <person name="Hughes T."/>
            <person name="Roberts C."/>
            <person name="Bard M."/>
        </authorList>
    </citation>
    <scope>IDENTIFICATION</scope>
    <scope>FUNCTION</scope>
</reference>
<reference key="5">
    <citation type="journal article" date="2008" name="Microbiology">
        <title>Multiple functions of ergosterol in the fission yeast Schizosaccharomyces pombe.</title>
        <authorList>
            <person name="Iwaki T."/>
            <person name="Iefuji H."/>
            <person name="Hiraga Y."/>
            <person name="Hosomi A."/>
            <person name="Morita T."/>
            <person name="Giga-Hama Y."/>
            <person name="Takegawa K."/>
        </authorList>
    </citation>
    <scope>FUNCTION</scope>
</reference>
<reference key="6">
    <citation type="journal article" date="2013" name="Mol. Genet. Genomics">
        <title>Screening for long-lived genes identifies Oga1, a guanine-quadruplex associated protein that affects the chronological lifespan of the fission yeast Schizosaccharomyces pombe.</title>
        <authorList>
            <person name="Ohtsuka H."/>
            <person name="Ogawa S."/>
            <person name="Kawamura H."/>
            <person name="Sakai E."/>
            <person name="Ichinose K."/>
            <person name="Murakami H."/>
            <person name="Aiba H."/>
        </authorList>
    </citation>
    <scope>FUNCTION</scope>
</reference>
<name>ERG28_SCHPO</name>
<feature type="chain" id="PRO_0000193907" description="Ergosterol biosynthetic protein 28">
    <location>
        <begin position="1"/>
        <end position="136"/>
    </location>
</feature>
<feature type="transmembrane region" description="Helical" evidence="1">
    <location>
        <begin position="18"/>
        <end position="34"/>
    </location>
</feature>
<feature type="transmembrane region" description="Helical" evidence="1">
    <location>
        <begin position="56"/>
        <end position="72"/>
    </location>
</feature>
<feature type="transmembrane region" description="Helical" evidence="1">
    <location>
        <begin position="79"/>
        <end position="95"/>
    </location>
</feature>
<feature type="transmembrane region" description="Helical" evidence="1">
    <location>
        <begin position="109"/>
        <end position="125"/>
    </location>
</feature>
<gene>
    <name evidence="5" type="primary">erg28</name>
    <name type="ORF">SPBC337.09</name>
</gene>
<proteinExistence type="inferred from homology"/>
<accession>O74820</accession>